<accession>Q8DBF9</accession>
<feature type="chain" id="PRO_0000143905" description="Uridylate kinase">
    <location>
        <begin position="1"/>
        <end position="241"/>
    </location>
</feature>
<feature type="region of interest" description="Involved in allosteric activation by GTP" evidence="1">
    <location>
        <begin position="23"/>
        <end position="28"/>
    </location>
</feature>
<feature type="binding site" evidence="1">
    <location>
        <begin position="15"/>
        <end position="18"/>
    </location>
    <ligand>
        <name>ATP</name>
        <dbReference type="ChEBI" id="CHEBI:30616"/>
    </ligand>
</feature>
<feature type="binding site" evidence="1">
    <location>
        <position position="57"/>
    </location>
    <ligand>
        <name>UMP</name>
        <dbReference type="ChEBI" id="CHEBI:57865"/>
    </ligand>
</feature>
<feature type="binding site" evidence="1">
    <location>
        <position position="58"/>
    </location>
    <ligand>
        <name>ATP</name>
        <dbReference type="ChEBI" id="CHEBI:30616"/>
    </ligand>
</feature>
<feature type="binding site" evidence="1">
    <location>
        <position position="62"/>
    </location>
    <ligand>
        <name>ATP</name>
        <dbReference type="ChEBI" id="CHEBI:30616"/>
    </ligand>
</feature>
<feature type="binding site" evidence="1">
    <location>
        <position position="77"/>
    </location>
    <ligand>
        <name>UMP</name>
        <dbReference type="ChEBI" id="CHEBI:57865"/>
    </ligand>
</feature>
<feature type="binding site" evidence="1">
    <location>
        <begin position="138"/>
        <end position="145"/>
    </location>
    <ligand>
        <name>UMP</name>
        <dbReference type="ChEBI" id="CHEBI:57865"/>
    </ligand>
</feature>
<feature type="binding site" evidence="1">
    <location>
        <position position="165"/>
    </location>
    <ligand>
        <name>ATP</name>
        <dbReference type="ChEBI" id="CHEBI:30616"/>
    </ligand>
</feature>
<feature type="binding site" evidence="1">
    <location>
        <position position="171"/>
    </location>
    <ligand>
        <name>ATP</name>
        <dbReference type="ChEBI" id="CHEBI:30616"/>
    </ligand>
</feature>
<feature type="binding site" evidence="1">
    <location>
        <position position="174"/>
    </location>
    <ligand>
        <name>ATP</name>
        <dbReference type="ChEBI" id="CHEBI:30616"/>
    </ligand>
</feature>
<dbReference type="EC" id="2.7.4.22" evidence="1"/>
<dbReference type="EMBL" id="AE016795">
    <property type="protein sequence ID" value="AAO10264.1"/>
    <property type="molecule type" value="Genomic_DNA"/>
</dbReference>
<dbReference type="RefSeq" id="WP_011079764.1">
    <property type="nucleotide sequence ID" value="NC_004459.3"/>
</dbReference>
<dbReference type="SMR" id="Q8DBF9"/>
<dbReference type="KEGG" id="vvu:VV1_1861"/>
<dbReference type="HOGENOM" id="CLU_033861_0_0_6"/>
<dbReference type="UniPathway" id="UPA00159">
    <property type="reaction ID" value="UER00275"/>
</dbReference>
<dbReference type="Proteomes" id="UP000002275">
    <property type="component" value="Chromosome 1"/>
</dbReference>
<dbReference type="GO" id="GO:0005829">
    <property type="term" value="C:cytosol"/>
    <property type="evidence" value="ECO:0007669"/>
    <property type="project" value="TreeGrafter"/>
</dbReference>
<dbReference type="GO" id="GO:0005524">
    <property type="term" value="F:ATP binding"/>
    <property type="evidence" value="ECO:0007669"/>
    <property type="project" value="UniProtKB-KW"/>
</dbReference>
<dbReference type="GO" id="GO:0033862">
    <property type="term" value="F:UMP kinase activity"/>
    <property type="evidence" value="ECO:0007669"/>
    <property type="project" value="UniProtKB-EC"/>
</dbReference>
<dbReference type="GO" id="GO:0044210">
    <property type="term" value="P:'de novo' CTP biosynthetic process"/>
    <property type="evidence" value="ECO:0007669"/>
    <property type="project" value="UniProtKB-UniRule"/>
</dbReference>
<dbReference type="GO" id="GO:0006225">
    <property type="term" value="P:UDP biosynthetic process"/>
    <property type="evidence" value="ECO:0007669"/>
    <property type="project" value="TreeGrafter"/>
</dbReference>
<dbReference type="CDD" id="cd04254">
    <property type="entry name" value="AAK_UMPK-PyrH-Ec"/>
    <property type="match status" value="1"/>
</dbReference>
<dbReference type="FunFam" id="3.40.1160.10:FF:000001">
    <property type="entry name" value="Uridylate kinase"/>
    <property type="match status" value="1"/>
</dbReference>
<dbReference type="Gene3D" id="3.40.1160.10">
    <property type="entry name" value="Acetylglutamate kinase-like"/>
    <property type="match status" value="1"/>
</dbReference>
<dbReference type="HAMAP" id="MF_01220_B">
    <property type="entry name" value="PyrH_B"/>
    <property type="match status" value="1"/>
</dbReference>
<dbReference type="InterPro" id="IPR036393">
    <property type="entry name" value="AceGlu_kinase-like_sf"/>
</dbReference>
<dbReference type="InterPro" id="IPR001048">
    <property type="entry name" value="Asp/Glu/Uridylate_kinase"/>
</dbReference>
<dbReference type="InterPro" id="IPR011817">
    <property type="entry name" value="Uridylate_kinase"/>
</dbReference>
<dbReference type="InterPro" id="IPR015963">
    <property type="entry name" value="Uridylate_kinase_bac"/>
</dbReference>
<dbReference type="NCBIfam" id="TIGR02075">
    <property type="entry name" value="pyrH_bact"/>
    <property type="match status" value="1"/>
</dbReference>
<dbReference type="PANTHER" id="PTHR42833">
    <property type="entry name" value="URIDYLATE KINASE"/>
    <property type="match status" value="1"/>
</dbReference>
<dbReference type="PANTHER" id="PTHR42833:SF4">
    <property type="entry name" value="URIDYLATE KINASE PUMPKIN, CHLOROPLASTIC"/>
    <property type="match status" value="1"/>
</dbReference>
<dbReference type="Pfam" id="PF00696">
    <property type="entry name" value="AA_kinase"/>
    <property type="match status" value="1"/>
</dbReference>
<dbReference type="PIRSF" id="PIRSF005650">
    <property type="entry name" value="Uridylate_kin"/>
    <property type="match status" value="1"/>
</dbReference>
<dbReference type="SUPFAM" id="SSF53633">
    <property type="entry name" value="Carbamate kinase-like"/>
    <property type="match status" value="1"/>
</dbReference>
<organism>
    <name type="scientific">Vibrio vulnificus (strain CMCP6)</name>
    <dbReference type="NCBI Taxonomy" id="216895"/>
    <lineage>
        <taxon>Bacteria</taxon>
        <taxon>Pseudomonadati</taxon>
        <taxon>Pseudomonadota</taxon>
        <taxon>Gammaproteobacteria</taxon>
        <taxon>Vibrionales</taxon>
        <taxon>Vibrionaceae</taxon>
        <taxon>Vibrio</taxon>
    </lineage>
</organism>
<evidence type="ECO:0000255" key="1">
    <source>
        <dbReference type="HAMAP-Rule" id="MF_01220"/>
    </source>
</evidence>
<protein>
    <recommendedName>
        <fullName evidence="1">Uridylate kinase</fullName>
        <shortName evidence="1">UK</shortName>
        <ecNumber evidence="1">2.7.4.22</ecNumber>
    </recommendedName>
    <alternativeName>
        <fullName evidence="1">Uridine monophosphate kinase</fullName>
        <shortName evidence="1">UMP kinase</shortName>
        <shortName evidence="1">UMPK</shortName>
    </alternativeName>
</protein>
<keyword id="KW-0021">Allosteric enzyme</keyword>
<keyword id="KW-0067">ATP-binding</keyword>
<keyword id="KW-0963">Cytoplasm</keyword>
<keyword id="KW-0418">Kinase</keyword>
<keyword id="KW-0547">Nucleotide-binding</keyword>
<keyword id="KW-0665">Pyrimidine biosynthesis</keyword>
<keyword id="KW-0808">Transferase</keyword>
<name>PYRH_VIBVU</name>
<proteinExistence type="inferred from homology"/>
<gene>
    <name evidence="1" type="primary">pyrH</name>
    <name type="ordered locus">VV1_1861</name>
</gene>
<reference key="1">
    <citation type="submission" date="2002-12" db="EMBL/GenBank/DDBJ databases">
        <title>Complete genome sequence of Vibrio vulnificus CMCP6.</title>
        <authorList>
            <person name="Rhee J.H."/>
            <person name="Kim S.Y."/>
            <person name="Chung S.S."/>
            <person name="Kim J.J."/>
            <person name="Moon Y.H."/>
            <person name="Jeong H."/>
            <person name="Choy H.E."/>
        </authorList>
    </citation>
    <scope>NUCLEOTIDE SEQUENCE [LARGE SCALE GENOMIC DNA]</scope>
    <source>
        <strain>CMCP6</strain>
    </source>
</reference>
<sequence length="241" mass="25938">MTTNPKPAYQRILLKLSGEALQGSEGFGIDPTVLDRMAQEVKELVELGVQVGVVIGGGNLFRGAGLAQAGMNRVVGDHMGMLATVMNGLAMRDALHRAYVNARVMSAIPLNGVCDDYNWADAIRELRQGRVVIFAAGTGNPFFTTDSAACLRGIEIEADVVLKATKVDGVFTADPVANPDAELYDKLSYTDVLEKELKVMDLAAFTLARDHKMPIRVFNMNKPGALRRVVMGEAEGTLITA</sequence>
<comment type="function">
    <text evidence="1">Catalyzes the reversible phosphorylation of UMP to UDP.</text>
</comment>
<comment type="catalytic activity">
    <reaction evidence="1">
        <text>UMP + ATP = UDP + ADP</text>
        <dbReference type="Rhea" id="RHEA:24400"/>
        <dbReference type="ChEBI" id="CHEBI:30616"/>
        <dbReference type="ChEBI" id="CHEBI:57865"/>
        <dbReference type="ChEBI" id="CHEBI:58223"/>
        <dbReference type="ChEBI" id="CHEBI:456216"/>
        <dbReference type="EC" id="2.7.4.22"/>
    </reaction>
</comment>
<comment type="activity regulation">
    <text evidence="1">Allosterically activated by GTP. Inhibited by UTP.</text>
</comment>
<comment type="pathway">
    <text evidence="1">Pyrimidine metabolism; CTP biosynthesis via de novo pathway; UDP from UMP (UMPK route): step 1/1.</text>
</comment>
<comment type="subunit">
    <text evidence="1">Homohexamer.</text>
</comment>
<comment type="subcellular location">
    <subcellularLocation>
        <location evidence="1">Cytoplasm</location>
    </subcellularLocation>
</comment>
<comment type="similarity">
    <text evidence="1">Belongs to the UMP kinase family.</text>
</comment>